<proteinExistence type="inferred from homology"/>
<dbReference type="EMBL" id="AE017199">
    <property type="protein sequence ID" value="AAR39323.1"/>
    <property type="molecule type" value="Genomic_DNA"/>
</dbReference>
<dbReference type="SMR" id="Q74MZ5"/>
<dbReference type="STRING" id="228908.NEQ480"/>
<dbReference type="EnsemblBacteria" id="AAR39323">
    <property type="protein sequence ID" value="AAR39323"/>
    <property type="gene ID" value="NEQ480"/>
</dbReference>
<dbReference type="KEGG" id="neq:NEQ480"/>
<dbReference type="PATRIC" id="fig|228908.8.peg.495"/>
<dbReference type="HOGENOM" id="CLU_097347_1_1_2"/>
<dbReference type="Proteomes" id="UP000000578">
    <property type="component" value="Chromosome"/>
</dbReference>
<dbReference type="GO" id="GO:0022627">
    <property type="term" value="C:cytosolic small ribosomal subunit"/>
    <property type="evidence" value="ECO:0007669"/>
    <property type="project" value="TreeGrafter"/>
</dbReference>
<dbReference type="GO" id="GO:0019843">
    <property type="term" value="F:rRNA binding"/>
    <property type="evidence" value="ECO:0007669"/>
    <property type="project" value="UniProtKB-UniRule"/>
</dbReference>
<dbReference type="GO" id="GO:0003735">
    <property type="term" value="F:structural constituent of ribosome"/>
    <property type="evidence" value="ECO:0007669"/>
    <property type="project" value="InterPro"/>
</dbReference>
<dbReference type="GO" id="GO:0000028">
    <property type="term" value="P:ribosomal small subunit assembly"/>
    <property type="evidence" value="ECO:0007669"/>
    <property type="project" value="TreeGrafter"/>
</dbReference>
<dbReference type="GO" id="GO:0006412">
    <property type="term" value="P:translation"/>
    <property type="evidence" value="ECO:0007669"/>
    <property type="project" value="UniProtKB-UniRule"/>
</dbReference>
<dbReference type="FunFam" id="3.30.860.10:FF:000002">
    <property type="entry name" value="40S ribosomal protein S15"/>
    <property type="match status" value="1"/>
</dbReference>
<dbReference type="Gene3D" id="3.30.860.10">
    <property type="entry name" value="30s Ribosomal Protein S19, Chain A"/>
    <property type="match status" value="1"/>
</dbReference>
<dbReference type="HAMAP" id="MF_00531">
    <property type="entry name" value="Ribosomal_uS19"/>
    <property type="match status" value="1"/>
</dbReference>
<dbReference type="InterPro" id="IPR002222">
    <property type="entry name" value="Ribosomal_uS19"/>
</dbReference>
<dbReference type="InterPro" id="IPR020934">
    <property type="entry name" value="Ribosomal_uS19_CS"/>
</dbReference>
<dbReference type="InterPro" id="IPR005713">
    <property type="entry name" value="Ribosomal_uS19_euk/arc"/>
</dbReference>
<dbReference type="InterPro" id="IPR023575">
    <property type="entry name" value="Ribosomal_uS19_SF"/>
</dbReference>
<dbReference type="NCBIfam" id="NF003121">
    <property type="entry name" value="PRK04038.1"/>
    <property type="match status" value="1"/>
</dbReference>
<dbReference type="NCBIfam" id="TIGR01025">
    <property type="entry name" value="uS19_arch"/>
    <property type="match status" value="1"/>
</dbReference>
<dbReference type="PANTHER" id="PTHR11880">
    <property type="entry name" value="RIBOSOMAL PROTEIN S19P FAMILY MEMBER"/>
    <property type="match status" value="1"/>
</dbReference>
<dbReference type="PANTHER" id="PTHR11880:SF2">
    <property type="entry name" value="SMALL RIBOSOMAL SUBUNIT PROTEIN US19"/>
    <property type="match status" value="1"/>
</dbReference>
<dbReference type="Pfam" id="PF00203">
    <property type="entry name" value="Ribosomal_S19"/>
    <property type="match status" value="1"/>
</dbReference>
<dbReference type="PIRSF" id="PIRSF002144">
    <property type="entry name" value="Ribosomal_S19"/>
    <property type="match status" value="1"/>
</dbReference>
<dbReference type="PRINTS" id="PR00975">
    <property type="entry name" value="RIBOSOMALS19"/>
</dbReference>
<dbReference type="SUPFAM" id="SSF54570">
    <property type="entry name" value="Ribosomal protein S19"/>
    <property type="match status" value="1"/>
</dbReference>
<dbReference type="PROSITE" id="PS00323">
    <property type="entry name" value="RIBOSOMAL_S19"/>
    <property type="match status" value="1"/>
</dbReference>
<name>RS19_NANEQ</name>
<evidence type="ECO:0000255" key="1">
    <source>
        <dbReference type="HAMAP-Rule" id="MF_00531"/>
    </source>
</evidence>
<evidence type="ECO:0000256" key="2">
    <source>
        <dbReference type="SAM" id="MobiDB-lite"/>
    </source>
</evidence>
<evidence type="ECO:0000305" key="3"/>
<accession>Q74MZ5</accession>
<organism>
    <name type="scientific">Nanoarchaeum equitans (strain Kin4-M)</name>
    <dbReference type="NCBI Taxonomy" id="228908"/>
    <lineage>
        <taxon>Archaea</taxon>
        <taxon>Nanobdellota</taxon>
        <taxon>Candidatus Nanoarchaeia</taxon>
        <taxon>Nanoarchaeales</taxon>
        <taxon>Nanoarchaeaceae</taxon>
        <taxon>Nanoarchaeum</taxon>
    </lineage>
</organism>
<comment type="function">
    <text evidence="1">Protein S19 forms a complex with S13 that binds strongly to the 16S ribosomal RNA.</text>
</comment>
<comment type="similarity">
    <text evidence="1">Belongs to the universal ribosomal protein uS19 family.</text>
</comment>
<protein>
    <recommendedName>
        <fullName evidence="1">Small ribosomal subunit protein uS19</fullName>
    </recommendedName>
    <alternativeName>
        <fullName evidence="3">30S ribosomal protein S19</fullName>
    </alternativeName>
</protein>
<gene>
    <name evidence="1" type="primary">rps19</name>
    <name type="ordered locus">NEQ480</name>
</gene>
<keyword id="KW-1185">Reference proteome</keyword>
<keyword id="KW-0687">Ribonucleoprotein</keyword>
<keyword id="KW-0689">Ribosomal protein</keyword>
<keyword id="KW-0694">RNA-binding</keyword>
<keyword id="KW-0699">rRNA-binding</keyword>
<reference key="1">
    <citation type="journal article" date="2003" name="Proc. Natl. Acad. Sci. U.S.A.">
        <title>The genome of Nanoarchaeum equitans: insights into early archaeal evolution and derived parasitism.</title>
        <authorList>
            <person name="Waters E."/>
            <person name="Hohn M.J."/>
            <person name="Ahel I."/>
            <person name="Graham D.E."/>
            <person name="Adams M.D."/>
            <person name="Barnstead M."/>
            <person name="Beeson K.Y."/>
            <person name="Bibbs L."/>
            <person name="Bolanos R."/>
            <person name="Keller M."/>
            <person name="Kretz K."/>
            <person name="Lin X."/>
            <person name="Mathur E."/>
            <person name="Ni J."/>
            <person name="Podar M."/>
            <person name="Richardson T."/>
            <person name="Sutton G.G."/>
            <person name="Simon M."/>
            <person name="Soell D."/>
            <person name="Stetter K.O."/>
            <person name="Short J.M."/>
            <person name="Noorderwier M."/>
        </authorList>
    </citation>
    <scope>NUCLEOTIDE SEQUENCE [LARGE SCALE GENOMIC DNA]</scope>
    <source>
        <strain>Kin4-M</strain>
    </source>
</reference>
<feature type="chain" id="PRO_0000130007" description="Small ribosomal subunit protein uS19">
    <location>
        <begin position="1"/>
        <end position="140"/>
    </location>
</feature>
<feature type="region of interest" description="Disordered" evidence="2">
    <location>
        <begin position="120"/>
        <end position="140"/>
    </location>
</feature>
<feature type="compositionally biased region" description="Polar residues" evidence="2">
    <location>
        <begin position="131"/>
        <end position="140"/>
    </location>
</feature>
<sequence length="140" mass="16240">MIFSTMAKEFRYKGYTLQELEQMSLEELAKIMPARQRRTLLRRLKFGWSDQQKKLFKKILLAKEGKYKKPIKTHARNTIILPFMVGVTVHVYNGKEYVPVQIKPEMIGHYLGEFSFTTKRPKHSAPGIGATRSSAHVSKK</sequence>